<name>HSLV_SHEPW</name>
<comment type="function">
    <text evidence="1">Protease subunit of a proteasome-like degradation complex believed to be a general protein degrading machinery.</text>
</comment>
<comment type="catalytic activity">
    <reaction evidence="1">
        <text>ATP-dependent cleavage of peptide bonds with broad specificity.</text>
        <dbReference type="EC" id="3.4.25.2"/>
    </reaction>
</comment>
<comment type="activity regulation">
    <text evidence="1">Allosterically activated by HslU binding.</text>
</comment>
<comment type="subunit">
    <text evidence="1">A double ring-shaped homohexamer of HslV is capped on each side by a ring-shaped HslU homohexamer. The assembly of the HslU/HslV complex is dependent on binding of ATP.</text>
</comment>
<comment type="subcellular location">
    <subcellularLocation>
        <location evidence="1">Cytoplasm</location>
    </subcellularLocation>
</comment>
<comment type="similarity">
    <text evidence="1">Belongs to the peptidase T1B family. HslV subfamily.</text>
</comment>
<keyword id="KW-0021">Allosteric enzyme</keyword>
<keyword id="KW-0963">Cytoplasm</keyword>
<keyword id="KW-0378">Hydrolase</keyword>
<keyword id="KW-0479">Metal-binding</keyword>
<keyword id="KW-0645">Protease</keyword>
<keyword id="KW-0915">Sodium</keyword>
<keyword id="KW-0888">Threonine protease</keyword>
<feature type="chain" id="PRO_1000192686" description="ATP-dependent protease subunit HslV">
    <location>
        <begin position="1"/>
        <end position="174"/>
    </location>
</feature>
<feature type="active site" evidence="1">
    <location>
        <position position="2"/>
    </location>
</feature>
<feature type="binding site" evidence="1">
    <location>
        <position position="157"/>
    </location>
    <ligand>
        <name>Na(+)</name>
        <dbReference type="ChEBI" id="CHEBI:29101"/>
    </ligand>
</feature>
<feature type="binding site" evidence="1">
    <location>
        <position position="160"/>
    </location>
    <ligand>
        <name>Na(+)</name>
        <dbReference type="ChEBI" id="CHEBI:29101"/>
    </ligand>
</feature>
<feature type="binding site" evidence="1">
    <location>
        <position position="163"/>
    </location>
    <ligand>
        <name>Na(+)</name>
        <dbReference type="ChEBI" id="CHEBI:29101"/>
    </ligand>
</feature>
<protein>
    <recommendedName>
        <fullName evidence="1">ATP-dependent protease subunit HslV</fullName>
        <ecNumber evidence="1">3.4.25.2</ecNumber>
    </recommendedName>
</protein>
<organism>
    <name type="scientific">Shewanella piezotolerans (strain WP3 / JCM 13877)</name>
    <dbReference type="NCBI Taxonomy" id="225849"/>
    <lineage>
        <taxon>Bacteria</taxon>
        <taxon>Pseudomonadati</taxon>
        <taxon>Pseudomonadota</taxon>
        <taxon>Gammaproteobacteria</taxon>
        <taxon>Alteromonadales</taxon>
        <taxon>Shewanellaceae</taxon>
        <taxon>Shewanella</taxon>
    </lineage>
</organism>
<dbReference type="EC" id="3.4.25.2" evidence="1"/>
<dbReference type="EMBL" id="CP000472">
    <property type="protein sequence ID" value="ACJ27295.1"/>
    <property type="molecule type" value="Genomic_DNA"/>
</dbReference>
<dbReference type="RefSeq" id="WP_020910676.1">
    <property type="nucleotide sequence ID" value="NC_011566.1"/>
</dbReference>
<dbReference type="SMR" id="B8CI19"/>
<dbReference type="STRING" id="225849.swp_0464"/>
<dbReference type="MEROPS" id="T01.007"/>
<dbReference type="KEGG" id="swp:swp_0464"/>
<dbReference type="eggNOG" id="COG5405">
    <property type="taxonomic scope" value="Bacteria"/>
</dbReference>
<dbReference type="HOGENOM" id="CLU_093872_1_0_6"/>
<dbReference type="OrthoDB" id="9804884at2"/>
<dbReference type="Proteomes" id="UP000000753">
    <property type="component" value="Chromosome"/>
</dbReference>
<dbReference type="GO" id="GO:0009376">
    <property type="term" value="C:HslUV protease complex"/>
    <property type="evidence" value="ECO:0007669"/>
    <property type="project" value="UniProtKB-UniRule"/>
</dbReference>
<dbReference type="GO" id="GO:0005839">
    <property type="term" value="C:proteasome core complex"/>
    <property type="evidence" value="ECO:0007669"/>
    <property type="project" value="InterPro"/>
</dbReference>
<dbReference type="GO" id="GO:0046872">
    <property type="term" value="F:metal ion binding"/>
    <property type="evidence" value="ECO:0007669"/>
    <property type="project" value="UniProtKB-KW"/>
</dbReference>
<dbReference type="GO" id="GO:0004298">
    <property type="term" value="F:threonine-type endopeptidase activity"/>
    <property type="evidence" value="ECO:0007669"/>
    <property type="project" value="UniProtKB-KW"/>
</dbReference>
<dbReference type="GO" id="GO:0051603">
    <property type="term" value="P:proteolysis involved in protein catabolic process"/>
    <property type="evidence" value="ECO:0007669"/>
    <property type="project" value="InterPro"/>
</dbReference>
<dbReference type="CDD" id="cd01913">
    <property type="entry name" value="protease_HslV"/>
    <property type="match status" value="1"/>
</dbReference>
<dbReference type="FunFam" id="3.60.20.10:FF:000002">
    <property type="entry name" value="ATP-dependent protease subunit HslV"/>
    <property type="match status" value="1"/>
</dbReference>
<dbReference type="Gene3D" id="3.60.20.10">
    <property type="entry name" value="Glutamine Phosphoribosylpyrophosphate, subunit 1, domain 1"/>
    <property type="match status" value="1"/>
</dbReference>
<dbReference type="HAMAP" id="MF_00248">
    <property type="entry name" value="HslV"/>
    <property type="match status" value="1"/>
</dbReference>
<dbReference type="InterPro" id="IPR022281">
    <property type="entry name" value="ATP-dep_Prtase_HsIV_su"/>
</dbReference>
<dbReference type="InterPro" id="IPR029055">
    <property type="entry name" value="Ntn_hydrolases_N"/>
</dbReference>
<dbReference type="InterPro" id="IPR001353">
    <property type="entry name" value="Proteasome_sua/b"/>
</dbReference>
<dbReference type="InterPro" id="IPR023333">
    <property type="entry name" value="Proteasome_suB-type"/>
</dbReference>
<dbReference type="NCBIfam" id="TIGR03692">
    <property type="entry name" value="ATP_dep_HslV"/>
    <property type="match status" value="1"/>
</dbReference>
<dbReference type="NCBIfam" id="NF003964">
    <property type="entry name" value="PRK05456.1"/>
    <property type="match status" value="1"/>
</dbReference>
<dbReference type="PANTHER" id="PTHR32194:SF0">
    <property type="entry name" value="ATP-DEPENDENT PROTEASE SUBUNIT HSLV"/>
    <property type="match status" value="1"/>
</dbReference>
<dbReference type="PANTHER" id="PTHR32194">
    <property type="entry name" value="METALLOPROTEASE TLDD"/>
    <property type="match status" value="1"/>
</dbReference>
<dbReference type="Pfam" id="PF00227">
    <property type="entry name" value="Proteasome"/>
    <property type="match status" value="1"/>
</dbReference>
<dbReference type="PIRSF" id="PIRSF039093">
    <property type="entry name" value="HslV"/>
    <property type="match status" value="1"/>
</dbReference>
<dbReference type="SUPFAM" id="SSF56235">
    <property type="entry name" value="N-terminal nucleophile aminohydrolases (Ntn hydrolases)"/>
    <property type="match status" value="1"/>
</dbReference>
<dbReference type="PROSITE" id="PS51476">
    <property type="entry name" value="PROTEASOME_BETA_2"/>
    <property type="match status" value="1"/>
</dbReference>
<sequence length="174" mass="18810">MTTIVSVRRNNQVVIAGDGQVSLGNTVMKGNARKVRRLYHNKVLAGFAGGTADAFTLFERFEAKLEMHQGHLMRAAVEMAKDWRSDKVLRKLEALLAVADGEASLIITGNGDVVQPENDLIAIGSGGNFAQSAATALLENTELSALEIAEKSLTIAGDICVFTNQFKTIEELKY</sequence>
<gene>
    <name evidence="1" type="primary">hslV</name>
    <name type="ordered locus">swp_0464</name>
</gene>
<accession>B8CI19</accession>
<reference key="1">
    <citation type="journal article" date="2008" name="PLoS ONE">
        <title>Environmental adaptation: genomic analysis of the piezotolerant and psychrotolerant deep-sea iron reducing bacterium Shewanella piezotolerans WP3.</title>
        <authorList>
            <person name="Wang F."/>
            <person name="Wang J."/>
            <person name="Jian H."/>
            <person name="Zhang B."/>
            <person name="Li S."/>
            <person name="Wang F."/>
            <person name="Zeng X."/>
            <person name="Gao L."/>
            <person name="Bartlett D.H."/>
            <person name="Yu J."/>
            <person name="Hu S."/>
            <person name="Xiao X."/>
        </authorList>
    </citation>
    <scope>NUCLEOTIDE SEQUENCE [LARGE SCALE GENOMIC DNA]</scope>
    <source>
        <strain>WP3 / JCM 13877</strain>
    </source>
</reference>
<proteinExistence type="inferred from homology"/>
<evidence type="ECO:0000255" key="1">
    <source>
        <dbReference type="HAMAP-Rule" id="MF_00248"/>
    </source>
</evidence>